<name>CCM1_EREGS</name>
<sequence length="855" mass="97409">MILKSELLDVHTRLGQMLPFVTKRFASVPTAMRTRRRTRRHEREPNLRKRQGGSHSNLKENEDAELKFKLRQMNEFAKNLKMQMQLADSLRRKEEAARAEGIGGDVAEGAIERDSSTVAAALLEGAEPAEAQPAPLNLSQLIMSAQNAEPLLAPELAERIGDGKLVYSALVNKRAQNWDAIVAALYESAEKLRGLDADIVKEKLLLRVSGLSLEGVATLDKLLTDRFGEGRDFDVDMYGVLFETLGEHTQHTQQAKTVVDRMKKLLQRYDACDDPDKKPLTQEILNCCLKVGTAAKSFDDMNYFLSKFVKDYRILPNKVNYDQVLTFYLKNRTLSQAWETFGAMKFMSLSHRPDVATYNLMLQVCDQERNYSKALDLYHEIQDLKMEPDVRTLSMLAKAMASASTDAIVSEGKSDSLRLTGWKFIHEIENNPKYATAKDDPVCAHGVLTTMMALASYDGDVGLARALFYRHAVQSYKKLMKNANMDAVSNPAAAARAAWTQAIDPVLFNYLLMAYSRYQPNKLPILLGYELGAKFRRQLMFNVDYMGRAESDNDMHANIPLLPVMELSSTAEVLNESRALWEFFLSKHINGSLQPQPSARVVSMLEEYRQNHDTFEGFMKEVKSQVKRWQWHAVNRRLMTPITIMSYLSIPLRLGSYEEFAFRYKQTIYTGNELEESVKNFYDPALVTVSDEATVVVDDSEVKVEKYARKIDDRILQIYSFAYKNRVYNDVFELAMKAATKFRDNSLATRVWKERGEFRKTEGYTSMSVKDRIAGDTSFACATVKFFVAEKRFSEAMAVIMSSQKYIDWKYHMVRELHNALVSIEDSVSIRKLLSVVNKQNRLKVLNTESPSLTP</sequence>
<accession>Q752U3</accession>
<feature type="transit peptide" description="Mitochondrion" evidence="2">
    <location>
        <begin position="1"/>
        <end status="unknown"/>
    </location>
</feature>
<feature type="chain" id="PRO_0000402255" description="Mitochondrial 15S rRNA processing factor CCM1">
    <location>
        <begin status="unknown"/>
        <end position="855"/>
    </location>
</feature>
<feature type="repeat" description="PPR 1" evidence="3">
    <location>
        <begin position="234"/>
        <end position="265"/>
    </location>
</feature>
<feature type="repeat" description="PPR 2" evidence="3">
    <location>
        <begin position="317"/>
        <end position="351"/>
    </location>
</feature>
<feature type="repeat" description="PPR 3" evidence="3">
    <location>
        <begin position="354"/>
        <end position="388"/>
    </location>
</feature>
<feature type="region of interest" description="Disordered" evidence="4">
    <location>
        <begin position="29"/>
        <end position="61"/>
    </location>
</feature>
<gene>
    <name type="primary">CCM1</name>
    <name type="ordered locus">AFR480C</name>
    <name type="ORF">AGOS_AFR480C</name>
</gene>
<organism>
    <name type="scientific">Eremothecium gossypii (strain ATCC 10895 / CBS 109.51 / FGSC 9923 / NRRL Y-1056)</name>
    <name type="common">Yeast</name>
    <name type="synonym">Ashbya gossypii</name>
    <dbReference type="NCBI Taxonomy" id="284811"/>
    <lineage>
        <taxon>Eukaryota</taxon>
        <taxon>Fungi</taxon>
        <taxon>Dikarya</taxon>
        <taxon>Ascomycota</taxon>
        <taxon>Saccharomycotina</taxon>
        <taxon>Saccharomycetes</taxon>
        <taxon>Saccharomycetales</taxon>
        <taxon>Saccharomycetaceae</taxon>
        <taxon>Eremothecium</taxon>
    </lineage>
</organism>
<proteinExistence type="inferred from homology"/>
<reference key="1">
    <citation type="journal article" date="2004" name="Science">
        <title>The Ashbya gossypii genome as a tool for mapping the ancient Saccharomyces cerevisiae genome.</title>
        <authorList>
            <person name="Dietrich F.S."/>
            <person name="Voegeli S."/>
            <person name="Brachat S."/>
            <person name="Lerch A."/>
            <person name="Gates K."/>
            <person name="Steiner S."/>
            <person name="Mohr C."/>
            <person name="Poehlmann R."/>
            <person name="Luedi P."/>
            <person name="Choi S."/>
            <person name="Wing R.A."/>
            <person name="Flavier A."/>
            <person name="Gaffney T.D."/>
            <person name="Philippsen P."/>
        </authorList>
    </citation>
    <scope>NUCLEOTIDE SEQUENCE [LARGE SCALE GENOMIC DNA]</scope>
    <source>
        <strain>ATCC 10895 / CBS 109.51 / FGSC 9923 / NRRL Y-1056</strain>
    </source>
</reference>
<reference key="2">
    <citation type="journal article" date="2013" name="G3 (Bethesda)">
        <title>Genomes of Ashbya fungi isolated from insects reveal four mating-type loci, numerous translocations, lack of transposons, and distinct gene duplications.</title>
        <authorList>
            <person name="Dietrich F.S."/>
            <person name="Voegeli S."/>
            <person name="Kuo S."/>
            <person name="Philippsen P."/>
        </authorList>
    </citation>
    <scope>GENOME REANNOTATION</scope>
    <source>
        <strain>ATCC 10895 / CBS 109.51 / FGSC 9923 / NRRL Y-1056</strain>
    </source>
</reference>
<comment type="function">
    <text evidence="1">Regulates mitochondrial small subunit maturation by controlling 15S rRNA 5'-end processing. Localizes to the 5' precursor of the 15S rRNA in a position that is subsequently occupied by mS47 in the mature yeast mtSSU. Uses structure and sequence-specific RNA recognition, binding to a single-stranded region of the precursor and specifically recognizing bases -6 to -1. The exchange of Ccm1 for mS47 is coupled to the irreversible removal of precursor rRNA that is accompanied by conformational changes of the mitoribosomal proteins uS5m and mS26. These conformational changes signal completion of 5'-end rRNA processing through protection of the mature 5'-end of the 15S rRNA and stabilization of mS47. The removal of the 5' precursor together with the dissociation of Ccm1 may be catalyzed by the 5'-3' exoribonuclease Pet127. Involved in the specific removal of group I introns in mitochondrial encoded transcripts.</text>
</comment>
<comment type="subunit">
    <text evidence="1">Binds to mitochondrial small subunit 15S rRNA.</text>
</comment>
<comment type="subcellular location">
    <subcellularLocation>
        <location evidence="1">Mitochondrion</location>
    </subcellularLocation>
</comment>
<comment type="miscellaneous">
    <text evidence="1">Involved in mitochondrial-nuclear incompatibility, a major determinant in reproductive isolation between species, through hybrid incompatibility of Ccm1 and its interacting partner 15S rRNA between yeast species.</text>
</comment>
<comment type="similarity">
    <text evidence="5">Belongs to the CCM1 family.</text>
</comment>
<protein>
    <recommendedName>
        <fullName>Mitochondrial 15S rRNA processing factor CCM1</fullName>
    </recommendedName>
</protein>
<evidence type="ECO:0000250" key="1">
    <source>
        <dbReference type="UniProtKB" id="P48237"/>
    </source>
</evidence>
<evidence type="ECO:0000255" key="2"/>
<evidence type="ECO:0000255" key="3">
    <source>
        <dbReference type="PROSITE-ProRule" id="PRU00708"/>
    </source>
</evidence>
<evidence type="ECO:0000256" key="4">
    <source>
        <dbReference type="SAM" id="MobiDB-lite"/>
    </source>
</evidence>
<evidence type="ECO:0000305" key="5"/>
<dbReference type="EMBL" id="AE016819">
    <property type="protein sequence ID" value="AAS53851.1"/>
    <property type="molecule type" value="Genomic_DNA"/>
</dbReference>
<dbReference type="RefSeq" id="NP_986027.1">
    <property type="nucleotide sequence ID" value="NM_212163.1"/>
</dbReference>
<dbReference type="SMR" id="Q752U3"/>
<dbReference type="FunCoup" id="Q752U3">
    <property type="interactions" value="129"/>
</dbReference>
<dbReference type="STRING" id="284811.Q752U3"/>
<dbReference type="EnsemblFungi" id="AAS53851">
    <property type="protein sequence ID" value="AAS53851"/>
    <property type="gene ID" value="AGOS_AFR480C"/>
</dbReference>
<dbReference type="GeneID" id="4622306"/>
<dbReference type="KEGG" id="ago:AGOS_AFR480C"/>
<dbReference type="eggNOG" id="ENOG502QUX2">
    <property type="taxonomic scope" value="Eukaryota"/>
</dbReference>
<dbReference type="HOGENOM" id="CLU_334653_0_0_1"/>
<dbReference type="InParanoid" id="Q752U3"/>
<dbReference type="OMA" id="ESSAIWA"/>
<dbReference type="OrthoDB" id="185373at2759"/>
<dbReference type="Proteomes" id="UP000000591">
    <property type="component" value="Chromosome VI"/>
</dbReference>
<dbReference type="GO" id="GO:0005737">
    <property type="term" value="C:cytoplasm"/>
    <property type="evidence" value="ECO:0000318"/>
    <property type="project" value="GO_Central"/>
</dbReference>
<dbReference type="GO" id="GO:0005739">
    <property type="term" value="C:mitochondrion"/>
    <property type="evidence" value="ECO:0007669"/>
    <property type="project" value="UniProtKB-SubCell"/>
</dbReference>
<dbReference type="GO" id="GO:0003729">
    <property type="term" value="F:mRNA binding"/>
    <property type="evidence" value="ECO:0000318"/>
    <property type="project" value="GO_Central"/>
</dbReference>
<dbReference type="GO" id="GO:0019843">
    <property type="term" value="F:rRNA binding"/>
    <property type="evidence" value="ECO:0007669"/>
    <property type="project" value="EnsemblFungi"/>
</dbReference>
<dbReference type="GO" id="GO:0000002">
    <property type="term" value="P:mitochondrial genome maintenance"/>
    <property type="evidence" value="ECO:0007669"/>
    <property type="project" value="EnsemblFungi"/>
</dbReference>
<dbReference type="GO" id="GO:0000963">
    <property type="term" value="P:mitochondrial RNA processing"/>
    <property type="evidence" value="ECO:0007669"/>
    <property type="project" value="EnsemblFungi"/>
</dbReference>
<dbReference type="GO" id="GO:0006397">
    <property type="term" value="P:mRNA processing"/>
    <property type="evidence" value="ECO:0000318"/>
    <property type="project" value="GO_Central"/>
</dbReference>
<dbReference type="GO" id="GO:2000234">
    <property type="term" value="P:positive regulation of rRNA processing"/>
    <property type="evidence" value="ECO:0007669"/>
    <property type="project" value="EnsemblFungi"/>
</dbReference>
<dbReference type="GO" id="GO:0008380">
    <property type="term" value="P:RNA splicing"/>
    <property type="evidence" value="ECO:0007669"/>
    <property type="project" value="UniProtKB-KW"/>
</dbReference>
<dbReference type="GO" id="GO:0016072">
    <property type="term" value="P:rRNA metabolic process"/>
    <property type="evidence" value="ECO:0007669"/>
    <property type="project" value="EnsemblFungi"/>
</dbReference>
<dbReference type="Gene3D" id="1.25.40.10">
    <property type="entry name" value="Tetratricopeptide repeat domain"/>
    <property type="match status" value="1"/>
</dbReference>
<dbReference type="InterPro" id="IPR002885">
    <property type="entry name" value="Pentatricopeptide_rpt"/>
</dbReference>
<dbReference type="InterPro" id="IPR051222">
    <property type="entry name" value="PPR/CCM1_RNA-binding"/>
</dbReference>
<dbReference type="InterPro" id="IPR011990">
    <property type="entry name" value="TPR-like_helical_dom_sf"/>
</dbReference>
<dbReference type="NCBIfam" id="TIGR00756">
    <property type="entry name" value="PPR"/>
    <property type="match status" value="1"/>
</dbReference>
<dbReference type="PANTHER" id="PTHR47942:SF63">
    <property type="entry name" value="PENTATRICOPEPTIDE REPEAT-CONTAINING PROTEIN"/>
    <property type="match status" value="1"/>
</dbReference>
<dbReference type="PANTHER" id="PTHR47942">
    <property type="entry name" value="TETRATRICOPEPTIDE REPEAT (TPR)-LIKE SUPERFAMILY PROTEIN-RELATED"/>
    <property type="match status" value="1"/>
</dbReference>
<dbReference type="Pfam" id="PF13041">
    <property type="entry name" value="PPR_2"/>
    <property type="match status" value="1"/>
</dbReference>
<dbReference type="PROSITE" id="PS51375">
    <property type="entry name" value="PPR"/>
    <property type="match status" value="3"/>
</dbReference>
<keyword id="KW-0496">Mitochondrion</keyword>
<keyword id="KW-0507">mRNA processing</keyword>
<keyword id="KW-0508">mRNA splicing</keyword>
<keyword id="KW-1185">Reference proteome</keyword>
<keyword id="KW-0677">Repeat</keyword>
<keyword id="KW-0809">Transit peptide</keyword>